<reference key="1">
    <citation type="submission" date="1992-01" db="EMBL/GenBank/DDBJ databases">
        <title>Structure and molecular evolution of the gene cluster encoding proteins of the rod substructure of the phycobilisome from the cyanobacterium Mastigocadus laminosus.</title>
        <authorList>
            <person name="Kufer W."/>
            <person name="Hoegner A."/>
            <person name="Eberlein M."/>
            <person name="Mayer K."/>
            <person name="Buchner A."/>
            <person name="Gottschalk L."/>
        </authorList>
    </citation>
    <scope>NUCLEOTIDE SEQUENCE [GENOMIC DNA]</scope>
</reference>
<name>PECF_MASLA</name>
<keyword id="KW-0042">Antenna complex</keyword>
<keyword id="KW-0456">Lyase</keyword>
<keyword id="KW-0605">Phycobilisome</keyword>
<protein>
    <recommendedName>
        <fullName>Bilin biosynthesis protein PecF</fullName>
    </recommendedName>
</protein>
<accession>P29730</accession>
<proteinExistence type="evidence at protein level"/>
<dbReference type="EMBL" id="M75599">
    <property type="protein sequence ID" value="AAC64648.1"/>
    <property type="molecule type" value="Genomic_DNA"/>
</dbReference>
<dbReference type="SMR" id="P29730"/>
<dbReference type="IntAct" id="P29730">
    <property type="interactions" value="1"/>
</dbReference>
<dbReference type="BRENDA" id="4.4.1.31">
    <property type="organism ID" value="7666"/>
</dbReference>
<dbReference type="GO" id="GO:0030089">
    <property type="term" value="C:phycobilisome"/>
    <property type="evidence" value="ECO:0007669"/>
    <property type="project" value="UniProtKB-KW"/>
</dbReference>
<dbReference type="GO" id="GO:0016829">
    <property type="term" value="F:lyase activity"/>
    <property type="evidence" value="ECO:0007669"/>
    <property type="project" value="UniProtKB-KW"/>
</dbReference>
<dbReference type="GO" id="GO:0016491">
    <property type="term" value="F:oxidoreductase activity"/>
    <property type="evidence" value="ECO:0007669"/>
    <property type="project" value="TreeGrafter"/>
</dbReference>
<dbReference type="Gene3D" id="1.25.10.10">
    <property type="entry name" value="Leucine-rich Repeat Variant"/>
    <property type="match status" value="2"/>
</dbReference>
<dbReference type="InterPro" id="IPR011989">
    <property type="entry name" value="ARM-like"/>
</dbReference>
<dbReference type="InterPro" id="IPR016024">
    <property type="entry name" value="ARM-type_fold"/>
</dbReference>
<dbReference type="InterPro" id="IPR000225">
    <property type="entry name" value="Armadillo"/>
</dbReference>
<dbReference type="InterPro" id="IPR004155">
    <property type="entry name" value="PBS_lyase_HEAT"/>
</dbReference>
<dbReference type="PANTHER" id="PTHR12697">
    <property type="entry name" value="PBS LYASE HEAT-LIKE PROTEIN"/>
    <property type="match status" value="1"/>
</dbReference>
<dbReference type="PANTHER" id="PTHR12697:SF40">
    <property type="entry name" value="PHYCOCYANOBILIN LYASE SUBUNIT ALPHA"/>
    <property type="match status" value="1"/>
</dbReference>
<dbReference type="Pfam" id="PF13646">
    <property type="entry name" value="HEAT_2"/>
    <property type="match status" value="2"/>
</dbReference>
<dbReference type="SMART" id="SM00567">
    <property type="entry name" value="EZ_HEAT"/>
    <property type="match status" value="4"/>
</dbReference>
<dbReference type="SUPFAM" id="SSF48371">
    <property type="entry name" value="ARM repeat"/>
    <property type="match status" value="1"/>
</dbReference>
<comment type="function">
    <text evidence="1">An enzyme involved in the biosynthesis of bilin.</text>
</comment>
<comment type="interaction">
    <interactant intactId="EBI-931840">
        <id>P29730</id>
    </interactant>
    <interactant intactId="EBI-931834">
        <id>P29729</id>
        <label>pecE</label>
    </interactant>
    <organismsDiffer>false</organismsDiffer>
    <experiments>2</experiments>
</comment>
<comment type="similarity">
    <text evidence="2">Belongs to the CpcE/RpcE/PecE family.</text>
</comment>
<evidence type="ECO:0000250" key="1"/>
<evidence type="ECO:0000305" key="2"/>
<feature type="chain" id="PRO_0000199284" description="Bilin biosynthesis protein PecF">
    <location>
        <begin position="1"/>
        <end position="212"/>
    </location>
</feature>
<gene>
    <name type="primary">pecF</name>
</gene>
<organism>
    <name type="scientific">Mastigocladus laminosus</name>
    <name type="common">Fischerella sp.</name>
    <dbReference type="NCBI Taxonomy" id="83541"/>
    <lineage>
        <taxon>Bacteria</taxon>
        <taxon>Bacillati</taxon>
        <taxon>Cyanobacteriota</taxon>
        <taxon>Cyanophyceae</taxon>
        <taxon>Nostocales</taxon>
        <taxon>Hapalosiphonaceae</taxon>
        <taxon>Mastigocladus</taxon>
    </lineage>
</organism>
<sequence length="212" mass="22580">MIAARFTNSKQLISQLNCALSPADALCAIAAISDSETTEVAVISALLQLLSRHHHHSSVATAAVEVLVKLAPASVEPLLAAFRSCSDQGFQAWIIQALAMIGDAKAFDLLAEVVGTEVANHCQGNVRRIAARGLGKIGSTVKDREVTDRAIEKLHWALVTPQDWGLRYAAVVSLQEIATPQAHAVLSAAVAGESDWVVRSRMKKALEQIPAC</sequence>